<feature type="chain" id="PRO_0000090914" description="Elongation factor 1-alpha">
    <location>
        <begin position="1"/>
        <end position="15" status="greater than"/>
    </location>
</feature>
<feature type="non-terminal residue">
    <location>
        <position position="15"/>
    </location>
</feature>
<dbReference type="GO" id="GO:0005737">
    <property type="term" value="C:cytoplasm"/>
    <property type="evidence" value="ECO:0007669"/>
    <property type="project" value="UniProtKB-SubCell"/>
</dbReference>
<dbReference type="GO" id="GO:0005525">
    <property type="term" value="F:GTP binding"/>
    <property type="evidence" value="ECO:0007669"/>
    <property type="project" value="UniProtKB-KW"/>
</dbReference>
<dbReference type="GO" id="GO:0003746">
    <property type="term" value="F:translation elongation factor activity"/>
    <property type="evidence" value="ECO:0007669"/>
    <property type="project" value="UniProtKB-KW"/>
</dbReference>
<reference key="1">
    <citation type="journal article" date="1998" name="Arch. Insect Biochem. Physiol.">
        <title>An antibody diagnostic for hymenopteran parasitism is specific for a homologue of elongation factor-1 alpha.</title>
        <authorList>
            <person name="Stuart M.K."/>
        </authorList>
    </citation>
    <scope>PROTEIN SEQUENCE</scope>
</reference>
<protein>
    <recommendedName>
        <fullName>Elongation factor 1-alpha</fullName>
        <shortName>EF-1-alpha</shortName>
    </recommendedName>
</protein>
<name>EF1A_MICCR</name>
<organism>
    <name type="scientific">Microplitis croceipes</name>
    <name type="common">Braconid wasp</name>
    <dbReference type="NCBI Taxonomy" id="72115"/>
    <lineage>
        <taxon>Eukaryota</taxon>
        <taxon>Metazoa</taxon>
        <taxon>Ecdysozoa</taxon>
        <taxon>Arthropoda</taxon>
        <taxon>Hexapoda</taxon>
        <taxon>Insecta</taxon>
        <taxon>Pterygota</taxon>
        <taxon>Neoptera</taxon>
        <taxon>Endopterygota</taxon>
        <taxon>Hymenoptera</taxon>
        <taxon>Apocrita</taxon>
        <taxon>Ichneumonoidea</taxon>
        <taxon>Braconidae</taxon>
        <taxon>Microgastrinae</taxon>
        <taxon>Microplitis</taxon>
    </lineage>
</organism>
<evidence type="ECO:0000305" key="1"/>
<accession>P81266</accession>
<comment type="function">
    <text>This protein promotes the GTP-dependent binding of aminoacyl-tRNA to the A-site of ribosomes during protein biosynthesis.</text>
</comment>
<comment type="subcellular location">
    <subcellularLocation>
        <location>Cytoplasm</location>
    </subcellularLocation>
</comment>
<comment type="similarity">
    <text evidence="1">Belongs to the GTP-binding elongation factor family. EF-Tu/EF-1A subfamily.</text>
</comment>
<proteinExistence type="evidence at protein level"/>
<sequence>AKEKIHINIVVIGHV</sequence>
<keyword id="KW-0963">Cytoplasm</keyword>
<keyword id="KW-0903">Direct protein sequencing</keyword>
<keyword id="KW-0251">Elongation factor</keyword>
<keyword id="KW-0342">GTP-binding</keyword>
<keyword id="KW-0547">Nucleotide-binding</keyword>
<keyword id="KW-0648">Protein biosynthesis</keyword>